<feature type="chain" id="PRO_0000029999" description="S-adenosylmethionine decarboxylase beta chain" evidence="1">
    <location>
        <begin position="1"/>
        <end position="72"/>
    </location>
</feature>
<feature type="chain" id="PRO_0000030000" description="S-adenosylmethionine decarboxylase alpha chain" evidence="1">
    <location>
        <begin position="73"/>
        <end position="362"/>
    </location>
</feature>
<feature type="active site" evidence="1">
    <location>
        <position position="13"/>
    </location>
</feature>
<feature type="active site" evidence="1">
    <location>
        <position position="16"/>
    </location>
</feature>
<feature type="active site" description="Schiff-base intermediate with substrate; via pyruvic acid" evidence="1">
    <location>
        <position position="73"/>
    </location>
</feature>
<feature type="active site" description="Proton donor; for catalytic activity" evidence="1">
    <location>
        <position position="87"/>
    </location>
</feature>
<feature type="active site" description="Proton acceptor; for processing activity" evidence="1">
    <location>
        <position position="236"/>
    </location>
</feature>
<feature type="active site" description="Proton acceptor; for processing activity" evidence="1">
    <location>
        <position position="249"/>
    </location>
</feature>
<feature type="site" description="Cleavage (non-hydrolytic); by autolysis" evidence="1">
    <location>
        <begin position="72"/>
        <end position="73"/>
    </location>
</feature>
<feature type="modified residue" description="Pyruvic acid (Ser); by autocatalysis" evidence="1">
    <location>
        <position position="73"/>
    </location>
</feature>
<proteinExistence type="evidence at transcript level"/>
<keyword id="KW-0068">Autocatalytic cleavage</keyword>
<keyword id="KW-0210">Decarboxylase</keyword>
<keyword id="KW-0456">Lyase</keyword>
<keyword id="KW-0620">Polyamine biosynthesis</keyword>
<keyword id="KW-0670">Pyruvate</keyword>
<keyword id="KW-0949">S-adenosyl-L-methionine</keyword>
<keyword id="KW-0704">Schiff base</keyword>
<keyword id="KW-0745">Spermidine biosynthesis</keyword>
<keyword id="KW-0865">Zymogen</keyword>
<reference key="1">
    <citation type="submission" date="1996-09" db="EMBL/GenBank/DDBJ databases">
        <authorList>
            <person name="Michael A.J."/>
        </authorList>
    </citation>
    <scope>NUCLEOTIDE SEQUENCE [MRNA]</scope>
    <source>
        <strain>cv. D15/5</strain>
        <tissue>Root</tissue>
    </source>
</reference>
<gene>
    <name type="primary">SAMDC</name>
</gene>
<name>DCAM_DATST</name>
<protein>
    <recommendedName>
        <fullName>S-adenosylmethionine decarboxylase proenzyme</fullName>
        <shortName>AdoMetDC</shortName>
        <shortName>SAMDC</shortName>
        <ecNumber>4.1.1.50</ecNumber>
    </recommendedName>
    <component>
        <recommendedName>
            <fullName>S-adenosylmethionine decarboxylase alpha chain</fullName>
        </recommendedName>
    </component>
    <component>
        <recommendedName>
            <fullName>S-adenosylmethionine decarboxylase beta chain</fullName>
        </recommendedName>
    </component>
</protein>
<accession>Q96555</accession>
<organism>
    <name type="scientific">Datura stramonium</name>
    <name type="common">Jimsonweed</name>
    <name type="synonym">Common thornapple</name>
    <dbReference type="NCBI Taxonomy" id="4076"/>
    <lineage>
        <taxon>Eukaryota</taxon>
        <taxon>Viridiplantae</taxon>
        <taxon>Streptophyta</taxon>
        <taxon>Embryophyta</taxon>
        <taxon>Tracheophyta</taxon>
        <taxon>Spermatophyta</taxon>
        <taxon>Magnoliopsida</taxon>
        <taxon>eudicotyledons</taxon>
        <taxon>Gunneridae</taxon>
        <taxon>Pentapetalae</taxon>
        <taxon>asterids</taxon>
        <taxon>lamiids</taxon>
        <taxon>Solanales</taxon>
        <taxon>Solanaceae</taxon>
        <taxon>Solanoideae</taxon>
        <taxon>Datureae</taxon>
        <taxon>Datura</taxon>
    </lineage>
</organism>
<comment type="catalytic activity">
    <reaction>
        <text>S-adenosyl-L-methionine + H(+) = S-adenosyl 3-(methylsulfanyl)propylamine + CO2</text>
        <dbReference type="Rhea" id="RHEA:15981"/>
        <dbReference type="ChEBI" id="CHEBI:15378"/>
        <dbReference type="ChEBI" id="CHEBI:16526"/>
        <dbReference type="ChEBI" id="CHEBI:57443"/>
        <dbReference type="ChEBI" id="CHEBI:59789"/>
        <dbReference type="EC" id="4.1.1.50"/>
    </reaction>
</comment>
<comment type="cofactor">
    <cofactor evidence="1">
        <name>pyruvate</name>
        <dbReference type="ChEBI" id="CHEBI:15361"/>
    </cofactor>
    <text evidence="1">Binds 1 pyruvoyl group covalently per subunit.</text>
</comment>
<comment type="pathway">
    <text>Amine and polyamine biosynthesis; S-adenosylmethioninamine biosynthesis; S-adenosylmethioninamine from S-adenosyl-L-methionine: step 1/1.</text>
</comment>
<comment type="PTM">
    <text evidence="1">Is synthesized initially as an inactive proenzyme. Formation of the active enzyme involves a self-maturation process in which the active site pyruvoyl group is generated from an internal serine residue via an autocatalytic post-translational modification. Two non-identical subunits are generated from the proenzyme in this reaction, and the pyruvate is formed at the N-terminus of the alpha chain, which is derived from the carboxyl end of the proenzyme. The post-translation cleavage follows an unusual pathway, termed non-hydrolytic serinolysis, in which the side chain hydroxyl group of the serine supplies its oxygen atom to form the C-terminus of the beta chain, while the remainder of the serine residue undergoes an oxidative deamination to produce ammonia and the pyruvoyl group blocking the N-terminus of the alpha chain (By similarity).</text>
</comment>
<comment type="similarity">
    <text evidence="2">Belongs to the eukaryotic AdoMetDC family.</text>
</comment>
<dbReference type="EC" id="4.1.1.50"/>
<dbReference type="EMBL" id="Y07768">
    <property type="protein sequence ID" value="CAA69076.1"/>
    <property type="molecule type" value="mRNA"/>
</dbReference>
<dbReference type="SMR" id="Q96555"/>
<dbReference type="OrthoDB" id="1068353at2759"/>
<dbReference type="BRENDA" id="4.1.1.50">
    <property type="organism ID" value="1839"/>
</dbReference>
<dbReference type="UniPathway" id="UPA00331">
    <property type="reaction ID" value="UER00451"/>
</dbReference>
<dbReference type="GO" id="GO:0005829">
    <property type="term" value="C:cytosol"/>
    <property type="evidence" value="ECO:0007669"/>
    <property type="project" value="TreeGrafter"/>
</dbReference>
<dbReference type="GO" id="GO:0004014">
    <property type="term" value="F:adenosylmethionine decarboxylase activity"/>
    <property type="evidence" value="ECO:0007669"/>
    <property type="project" value="UniProtKB-EC"/>
</dbReference>
<dbReference type="GO" id="GO:0008295">
    <property type="term" value="P:spermidine biosynthetic process"/>
    <property type="evidence" value="ECO:0007669"/>
    <property type="project" value="UniProtKB-KW"/>
</dbReference>
<dbReference type="GO" id="GO:0006597">
    <property type="term" value="P:spermine biosynthetic process"/>
    <property type="evidence" value="ECO:0007669"/>
    <property type="project" value="InterPro"/>
</dbReference>
<dbReference type="FunFam" id="3.30.360.50:FF:000001">
    <property type="entry name" value="S-adenosylmethionine decarboxylase proenzyme"/>
    <property type="match status" value="1"/>
</dbReference>
<dbReference type="FunFam" id="3.60.90.10:FF:000002">
    <property type="entry name" value="S-adenosylmethionine decarboxylase proenzyme"/>
    <property type="match status" value="1"/>
</dbReference>
<dbReference type="Gene3D" id="3.30.360.50">
    <property type="entry name" value="S-adenosylmethionine decarboxylase"/>
    <property type="match status" value="1"/>
</dbReference>
<dbReference type="Gene3D" id="3.60.90.10">
    <property type="entry name" value="S-adenosylmethionine decarboxylase"/>
    <property type="match status" value="1"/>
</dbReference>
<dbReference type="InterPro" id="IPR048283">
    <property type="entry name" value="AdoMetDC-like"/>
</dbReference>
<dbReference type="InterPro" id="IPR001985">
    <property type="entry name" value="S-AdoMet_decarboxylase_euk"/>
</dbReference>
<dbReference type="InterPro" id="IPR016067">
    <property type="entry name" value="S-AdoMet_deCO2ase_core"/>
</dbReference>
<dbReference type="InterPro" id="IPR018166">
    <property type="entry name" value="S-AdoMet_deCO2ase_CS"/>
</dbReference>
<dbReference type="NCBIfam" id="TIGR00535">
    <property type="entry name" value="SAM_DCase"/>
    <property type="match status" value="1"/>
</dbReference>
<dbReference type="PANTHER" id="PTHR11570">
    <property type="entry name" value="S-ADENOSYLMETHIONINE DECARBOXYLASE"/>
    <property type="match status" value="1"/>
</dbReference>
<dbReference type="PANTHER" id="PTHR11570:SF15">
    <property type="entry name" value="S-ADENOSYLMETHIONINE DECARBOXYLASE PROENZYME 3"/>
    <property type="match status" value="1"/>
</dbReference>
<dbReference type="Pfam" id="PF01536">
    <property type="entry name" value="SAM_decarbox"/>
    <property type="match status" value="1"/>
</dbReference>
<dbReference type="PIRSF" id="PIRSF001355">
    <property type="entry name" value="S-AdenosylMet_decarboxylase"/>
    <property type="match status" value="1"/>
</dbReference>
<dbReference type="SUPFAM" id="SSF56276">
    <property type="entry name" value="S-adenosylmethionine decarboxylase"/>
    <property type="match status" value="1"/>
</dbReference>
<dbReference type="PROSITE" id="PS01336">
    <property type="entry name" value="ADOMETDC"/>
    <property type="match status" value="1"/>
</dbReference>
<sequence length="362" mass="39956">MEMDLPVSAIGFEGFEKRLEISFVEPGLFSDPNGKGLRSLSKAQLDEILGPAECTIVDNLSNDYVDSYVLSESSLFVYSYKIIIKTCGTTKLLLAIPPILRLAETLSLKVQDVRYTRGSFIFPGAQSFPHRHFSEEVAVLDGYFGKLAAGSKAVIMGNPDKTQKWHVYSASAGPVQSNDPVYTLEMCMTGLDREKASVFYKTEGSSAAHMTVRSGIRKILPNSEICDFEFEPCGYSMNSIEGAAVSTIHITPEDGFSYASFESVGYDLKTMELGPLVERVLACFEPAEFSIALHADVATKLLERVCCVDVKGYSLAEWSPEEFGKGGSIVYQKFTKTPYCASPKSVLKGCWKEEEEEKEEKE</sequence>
<evidence type="ECO:0000250" key="1"/>
<evidence type="ECO:0000305" key="2"/>